<gene>
    <name evidence="1" type="primary">EFEMP2</name>
    <name type="synonym">FBLN4</name>
</gene>
<organism>
    <name type="scientific">Cricetulus griseus</name>
    <name type="common">Chinese hamster</name>
    <name type="synonym">Cricetulus barabensis griseus</name>
    <dbReference type="NCBI Taxonomy" id="10029"/>
    <lineage>
        <taxon>Eukaryota</taxon>
        <taxon>Metazoa</taxon>
        <taxon>Chordata</taxon>
        <taxon>Craniata</taxon>
        <taxon>Vertebrata</taxon>
        <taxon>Euteleostomi</taxon>
        <taxon>Mammalia</taxon>
        <taxon>Eutheria</taxon>
        <taxon>Euarchontoglires</taxon>
        <taxon>Glires</taxon>
        <taxon>Rodentia</taxon>
        <taxon>Myomorpha</taxon>
        <taxon>Muroidea</taxon>
        <taxon>Cricetidae</taxon>
        <taxon>Cricetinae</taxon>
        <taxon>Cricetulus</taxon>
    </lineage>
</organism>
<name>FBLN4_CRIGR</name>
<dbReference type="EMBL" id="AF046870">
    <property type="protein sequence ID" value="AAC03101.1"/>
    <property type="molecule type" value="mRNA"/>
</dbReference>
<dbReference type="RefSeq" id="NP_001231778.1">
    <property type="nucleotide sequence ID" value="NM_001244849.1"/>
</dbReference>
<dbReference type="BMRB" id="O55058"/>
<dbReference type="GlyCosmos" id="O55058">
    <property type="glycosylation" value="2 sites, No reported glycans"/>
</dbReference>
<dbReference type="PaxDb" id="10029-NP_001231778.1"/>
<dbReference type="GeneID" id="100736553"/>
<dbReference type="KEGG" id="cge:100736553"/>
<dbReference type="CTD" id="30008"/>
<dbReference type="eggNOG" id="KOG1217">
    <property type="taxonomic scope" value="Eukaryota"/>
</dbReference>
<dbReference type="OrthoDB" id="4062651at2759"/>
<dbReference type="Proteomes" id="UP000694386">
    <property type="component" value="Unplaced"/>
</dbReference>
<dbReference type="Proteomes" id="UP001108280">
    <property type="component" value="Chromosome 3"/>
</dbReference>
<dbReference type="GO" id="GO:0005604">
    <property type="term" value="C:basement membrane"/>
    <property type="evidence" value="ECO:0000250"/>
    <property type="project" value="UniProtKB"/>
</dbReference>
<dbReference type="GO" id="GO:0071953">
    <property type="term" value="C:elastic fiber"/>
    <property type="evidence" value="ECO:0000250"/>
    <property type="project" value="UniProtKB"/>
</dbReference>
<dbReference type="GO" id="GO:0031012">
    <property type="term" value="C:extracellular matrix"/>
    <property type="evidence" value="ECO:0000250"/>
    <property type="project" value="UniProtKB"/>
</dbReference>
<dbReference type="GO" id="GO:0005576">
    <property type="term" value="C:extracellular region"/>
    <property type="evidence" value="ECO:0007669"/>
    <property type="project" value="UniProtKB-KW"/>
</dbReference>
<dbReference type="GO" id="GO:0001527">
    <property type="term" value="C:microfibril"/>
    <property type="evidence" value="ECO:0000250"/>
    <property type="project" value="UniProtKB"/>
</dbReference>
<dbReference type="GO" id="GO:0005509">
    <property type="term" value="F:calcium ion binding"/>
    <property type="evidence" value="ECO:0007669"/>
    <property type="project" value="InterPro"/>
</dbReference>
<dbReference type="GO" id="GO:0008201">
    <property type="term" value="F:heparin binding"/>
    <property type="evidence" value="ECO:0000250"/>
    <property type="project" value="UniProtKB"/>
</dbReference>
<dbReference type="GO" id="GO:0042803">
    <property type="term" value="F:protein homodimerization activity"/>
    <property type="evidence" value="ECO:0000250"/>
    <property type="project" value="UniProtKB"/>
</dbReference>
<dbReference type="GO" id="GO:0035904">
    <property type="term" value="P:aorta development"/>
    <property type="evidence" value="ECO:0000250"/>
    <property type="project" value="UniProtKB"/>
</dbReference>
<dbReference type="GO" id="GO:0060414">
    <property type="term" value="P:aorta smooth muscle tissue morphogenesis"/>
    <property type="evidence" value="ECO:0000250"/>
    <property type="project" value="UniProtKB"/>
</dbReference>
<dbReference type="GO" id="GO:0048251">
    <property type="term" value="P:elastic fiber assembly"/>
    <property type="evidence" value="ECO:0000250"/>
    <property type="project" value="UniProtKB"/>
</dbReference>
<dbReference type="GO" id="GO:1904706">
    <property type="term" value="P:negative regulation of vascular associated smooth muscle cell proliferation"/>
    <property type="evidence" value="ECO:0000250"/>
    <property type="project" value="UniProtKB"/>
</dbReference>
<dbReference type="GO" id="GO:1904831">
    <property type="term" value="P:positive regulation of aortic smooth muscle cell differentiation"/>
    <property type="evidence" value="ECO:0000250"/>
    <property type="project" value="UniProtKB"/>
</dbReference>
<dbReference type="GO" id="GO:1904028">
    <property type="term" value="P:positive regulation of collagen fibril organization"/>
    <property type="evidence" value="ECO:0000250"/>
    <property type="project" value="UniProtKB"/>
</dbReference>
<dbReference type="GO" id="GO:1905609">
    <property type="term" value="P:positive regulation of smooth muscle cell-matrix adhesion"/>
    <property type="evidence" value="ECO:0000250"/>
    <property type="project" value="UniProtKB"/>
</dbReference>
<dbReference type="GO" id="GO:1904026">
    <property type="term" value="P:regulation of collagen fibril organization"/>
    <property type="evidence" value="ECO:0000250"/>
    <property type="project" value="UniProtKB"/>
</dbReference>
<dbReference type="GO" id="GO:0097084">
    <property type="term" value="P:vascular associated smooth muscle cell development"/>
    <property type="evidence" value="ECO:0000250"/>
    <property type="project" value="UniProtKB"/>
</dbReference>
<dbReference type="CDD" id="cd00054">
    <property type="entry name" value="EGF_CA"/>
    <property type="match status" value="3"/>
</dbReference>
<dbReference type="FunFam" id="2.10.25.10:FF:000201">
    <property type="entry name" value="EGF-containing fibulin-like extracellular matrix protein 2"/>
    <property type="match status" value="1"/>
</dbReference>
<dbReference type="FunFam" id="2.10.25.10:FF:000290">
    <property type="entry name" value="EGF-containing fibulin-like extracellular matrix protein 2"/>
    <property type="match status" value="1"/>
</dbReference>
<dbReference type="FunFam" id="2.10.25.10:FF:000366">
    <property type="entry name" value="EGF-containing fibulin-like extracellular matrix protein 2"/>
    <property type="match status" value="1"/>
</dbReference>
<dbReference type="FunFam" id="2.10.25.10:FF:000367">
    <property type="entry name" value="EGF-containing fibulin-like extracellular matrix protein 2"/>
    <property type="match status" value="1"/>
</dbReference>
<dbReference type="FunFam" id="2.10.25.10:FF:000210">
    <property type="entry name" value="Hemicentin 1"/>
    <property type="match status" value="1"/>
</dbReference>
<dbReference type="FunFam" id="2.10.25.10:FF:000014">
    <property type="entry name" value="Latent-transforming growth factor beta-binding protein 3"/>
    <property type="match status" value="1"/>
</dbReference>
<dbReference type="Gene3D" id="2.10.25.10">
    <property type="entry name" value="Laminin"/>
    <property type="match status" value="6"/>
</dbReference>
<dbReference type="InterPro" id="IPR026823">
    <property type="entry name" value="cEGF"/>
</dbReference>
<dbReference type="InterPro" id="IPR001881">
    <property type="entry name" value="EGF-like_Ca-bd_dom"/>
</dbReference>
<dbReference type="InterPro" id="IPR013032">
    <property type="entry name" value="EGF-like_CS"/>
</dbReference>
<dbReference type="InterPro" id="IPR000742">
    <property type="entry name" value="EGF-like_dom"/>
</dbReference>
<dbReference type="InterPro" id="IPR000152">
    <property type="entry name" value="EGF-type_Asp/Asn_hydroxyl_site"/>
</dbReference>
<dbReference type="InterPro" id="IPR018097">
    <property type="entry name" value="EGF_Ca-bd_CS"/>
</dbReference>
<dbReference type="InterPro" id="IPR055088">
    <property type="entry name" value="Fibulin_C"/>
</dbReference>
<dbReference type="InterPro" id="IPR009030">
    <property type="entry name" value="Growth_fac_rcpt_cys_sf"/>
</dbReference>
<dbReference type="InterPro" id="IPR052235">
    <property type="entry name" value="Nephronectin_domain"/>
</dbReference>
<dbReference type="InterPro" id="IPR049883">
    <property type="entry name" value="NOTCH1_EGF-like"/>
</dbReference>
<dbReference type="PANTHER" id="PTHR24050">
    <property type="entry name" value="PA14 DOMAIN-CONTAINING PROTEIN"/>
    <property type="match status" value="1"/>
</dbReference>
<dbReference type="PANTHER" id="PTHR24050:SF28">
    <property type="entry name" value="UROMODULIN-LIKE"/>
    <property type="match status" value="1"/>
</dbReference>
<dbReference type="Pfam" id="PF12662">
    <property type="entry name" value="cEGF"/>
    <property type="match status" value="2"/>
</dbReference>
<dbReference type="Pfam" id="PF07645">
    <property type="entry name" value="EGF_CA"/>
    <property type="match status" value="3"/>
</dbReference>
<dbReference type="Pfam" id="PF22914">
    <property type="entry name" value="Fibulin_C"/>
    <property type="match status" value="1"/>
</dbReference>
<dbReference type="Pfam" id="PF12661">
    <property type="entry name" value="hEGF"/>
    <property type="match status" value="1"/>
</dbReference>
<dbReference type="PRINTS" id="PR00907">
    <property type="entry name" value="THRMBOMODULN"/>
</dbReference>
<dbReference type="SMART" id="SM00181">
    <property type="entry name" value="EGF"/>
    <property type="match status" value="5"/>
</dbReference>
<dbReference type="SMART" id="SM00179">
    <property type="entry name" value="EGF_CA"/>
    <property type="match status" value="6"/>
</dbReference>
<dbReference type="SUPFAM" id="SSF57184">
    <property type="entry name" value="Growth factor receptor domain"/>
    <property type="match status" value="2"/>
</dbReference>
<dbReference type="PROSITE" id="PS00010">
    <property type="entry name" value="ASX_HYDROXYL"/>
    <property type="match status" value="4"/>
</dbReference>
<dbReference type="PROSITE" id="PS01186">
    <property type="entry name" value="EGF_2"/>
    <property type="match status" value="4"/>
</dbReference>
<dbReference type="PROSITE" id="PS50026">
    <property type="entry name" value="EGF_3"/>
    <property type="match status" value="4"/>
</dbReference>
<dbReference type="PROSITE" id="PS01187">
    <property type="entry name" value="EGF_CA"/>
    <property type="match status" value="6"/>
</dbReference>
<accession>O55058</accession>
<evidence type="ECO:0000250" key="1">
    <source>
        <dbReference type="UniProtKB" id="O95967"/>
    </source>
</evidence>
<evidence type="ECO:0000250" key="2">
    <source>
        <dbReference type="UniProtKB" id="Q9WVJ9"/>
    </source>
</evidence>
<evidence type="ECO:0000255" key="3"/>
<evidence type="ECO:0000255" key="4">
    <source>
        <dbReference type="PROSITE-ProRule" id="PRU00076"/>
    </source>
</evidence>
<evidence type="ECO:0000305" key="5"/>
<comment type="function">
    <text evidence="2">Plays a crucial role in elastic fiber formation in tissue, and in the formation of ultrastructural connections between elastic laminae and smooth muscle cells in the aorta, therefore participates in terminal differentiation and maturation of smooth muscle cell (SMC) and in the mechanical properties and wall integrity maintenance of the aorta. In addition, is involved in the control of collagen fibril assembly in tissue throught proteolytic activation of LOX leading to cross- linking of collagen and elastin. Also promotes ELN coacervation and participates in the deposition of ELN coacervates on to microfibrils but also regulates ELN cross- linking through LOX interaction. Moreover adheres to the cells through heparin binding in a calcium-dependent manner and regulates vascularlar smooth muscle cells proliferation through angiotensin signaling.</text>
</comment>
<comment type="subunit">
    <text evidence="1 2">Homodimer; disulfide-linked. Multimer; allows heparin binding (By similarity). Monomer (By similarity). Interacts with FBN1 (via N-terminal domain); this interaction inhibits EFEMP2 binding to LOX and ELN. Interacts with LOX (via propeptide); this interaction is strong and facilitates formation of ternary complexes with ELN during elastic fiber assembly; this interaction limits interaction of EFEMP2 with FBLN5. Interacts with PITX2. Interacts with ELN with moderate affinity; this interaction regulates ELN self-assembly maturation stage. Interacts with FBLN5 with moderate affinity. Interacts with LOXL1 (via propeptide), LTBP1 and TGFB1 stronger than with LOXL2 and LTBP3 (By similarity). Interacts with PCOLCE. Interacts with collagen type IV trimer (COL4A1-COL4A1-COL4A2), NID2 and moderately with COL15A1-derived endostatin. Interacts with EMILIN1; this interaction promotes the incorporation of EFEMP2 into the extracellular matrix (By similarity). Interacts with LTBP4; the LTBP4 long form (LTBP4L) has a stronger binding affinity than the LTBP4 short form and the LTBP4 long form promotes fibrillar deposition of EFEMP2 (By similarity).</text>
</comment>
<comment type="subcellular location">
    <subcellularLocation>
        <location evidence="2">Secreted</location>
        <location evidence="2">Extracellular space</location>
        <location evidence="2">Extracellular matrix</location>
    </subcellularLocation>
    <subcellularLocation>
        <location evidence="2">Secreted</location>
        <location evidence="2">Extracellular space</location>
        <location evidence="2">Extracellular matrix</location>
        <location evidence="2">Basement membrane</location>
    </subcellularLocation>
    <text evidence="2">Localizes on the microfibrils surrounding ELN cores.</text>
</comment>
<comment type="PTM">
    <text evidence="1">N-glycosylated; contains mostly complex-type glycans. Not O-glycosylated.</text>
</comment>
<comment type="PTM">
    <text evidence="1">Cleaved by ELANE; produces a 50-55 kDa fragment. Cleaved by MMP2 and MMP9; produces several fragments.</text>
</comment>
<comment type="similarity">
    <text evidence="5">Belongs to the fibulin family.</text>
</comment>
<proteinExistence type="evidence at transcript level"/>
<keyword id="KW-0084">Basement membrane</keyword>
<keyword id="KW-0106">Calcium</keyword>
<keyword id="KW-1015">Disulfide bond</keyword>
<keyword id="KW-0245">EGF-like domain</keyword>
<keyword id="KW-0272">Extracellular matrix</keyword>
<keyword id="KW-0325">Glycoprotein</keyword>
<keyword id="KW-0677">Repeat</keyword>
<keyword id="KW-0964">Secreted</keyword>
<keyword id="KW-0732">Signal</keyword>
<reference key="1">
    <citation type="submission" date="1998-02" db="EMBL/GenBank/DDBJ databases">
        <authorList>
            <person name="Heine H."/>
            <person name="Delude R.L."/>
            <person name="Monks B."/>
            <person name="Golenbock D.T."/>
        </authorList>
    </citation>
    <scope>NUCLEOTIDE SEQUENCE [MRNA]</scope>
    <source>
        <tissue>Ovary</tissue>
    </source>
</reference>
<feature type="signal peptide" evidence="3">
    <location>
        <begin position="1"/>
        <end position="25"/>
    </location>
</feature>
<feature type="chain" id="PRO_0000007574" description="EGF-containing fibulin-like extracellular matrix protein 2">
    <location>
        <begin position="26"/>
        <end position="443"/>
    </location>
</feature>
<feature type="domain" description="EGF-like 1; atypical" evidence="4">
    <location>
        <begin position="36"/>
        <end position="81"/>
    </location>
</feature>
<feature type="domain" description="EGF-like 2; calcium-binding" evidence="4">
    <location>
        <begin position="123"/>
        <end position="163"/>
    </location>
</feature>
<feature type="domain" description="EGF-like 3; calcium-binding" evidence="4">
    <location>
        <begin position="164"/>
        <end position="202"/>
    </location>
</feature>
<feature type="domain" description="EGF-like 4; calcium-binding" evidence="4">
    <location>
        <begin position="203"/>
        <end position="242"/>
    </location>
</feature>
<feature type="domain" description="EGF-like 5; calcium-binding" evidence="4">
    <location>
        <begin position="243"/>
        <end position="282"/>
    </location>
</feature>
<feature type="domain" description="EGF-like 6; calcium-binding" evidence="4">
    <location>
        <begin position="283"/>
        <end position="328"/>
    </location>
</feature>
<feature type="site" description="Cleavage; by ELANE" evidence="1">
    <location>
        <begin position="87"/>
        <end position="88"/>
    </location>
</feature>
<feature type="site" description="Cleavage; by MMP2, MMP3, MMP7, MMP9, MMP12" evidence="1">
    <location>
        <begin position="90"/>
        <end position="91"/>
    </location>
</feature>
<feature type="site" description="Cleavage" evidence="1">
    <location>
        <begin position="92"/>
        <end position="93"/>
    </location>
</feature>
<feature type="glycosylation site" description="N-linked (GlcNAc...) asparagine" evidence="3">
    <location>
        <position position="198"/>
    </location>
</feature>
<feature type="glycosylation site" description="N-linked (GlcNAc...) asparagine" evidence="3">
    <location>
        <position position="394"/>
    </location>
</feature>
<feature type="disulfide bond" evidence="4">
    <location>
        <begin position="58"/>
        <end position="121"/>
    </location>
</feature>
<feature type="disulfide bond" evidence="4">
    <location>
        <begin position="65"/>
        <end position="80"/>
    </location>
</feature>
<feature type="disulfide bond" evidence="4">
    <location>
        <begin position="71"/>
        <end position="109"/>
    </location>
</feature>
<feature type="disulfide bond" evidence="4">
    <location>
        <begin position="127"/>
        <end position="140"/>
    </location>
</feature>
<feature type="disulfide bond" evidence="4">
    <location>
        <begin position="134"/>
        <end position="149"/>
    </location>
</feature>
<feature type="disulfide bond" evidence="4">
    <location>
        <begin position="151"/>
        <end position="162"/>
    </location>
</feature>
<feature type="disulfide bond" evidence="4">
    <location>
        <begin position="168"/>
        <end position="177"/>
    </location>
</feature>
<feature type="disulfide bond" evidence="4">
    <location>
        <begin position="173"/>
        <end position="186"/>
    </location>
</feature>
<feature type="disulfide bond" evidence="4">
    <location>
        <begin position="188"/>
        <end position="201"/>
    </location>
</feature>
<feature type="disulfide bond" evidence="4">
    <location>
        <begin position="207"/>
        <end position="217"/>
    </location>
</feature>
<feature type="disulfide bond" evidence="4">
    <location>
        <begin position="213"/>
        <end position="226"/>
    </location>
</feature>
<feature type="disulfide bond" evidence="4">
    <location>
        <begin position="228"/>
        <end position="241"/>
    </location>
</feature>
<feature type="disulfide bond" evidence="4">
    <location>
        <begin position="247"/>
        <end position="258"/>
    </location>
</feature>
<feature type="disulfide bond" evidence="4">
    <location>
        <begin position="254"/>
        <end position="267"/>
    </location>
</feature>
<feature type="disulfide bond" evidence="4">
    <location>
        <begin position="269"/>
        <end position="281"/>
    </location>
</feature>
<feature type="disulfide bond" evidence="4">
    <location>
        <begin position="287"/>
        <end position="300"/>
    </location>
</feature>
<feature type="disulfide bond" evidence="4">
    <location>
        <begin position="294"/>
        <end position="309"/>
    </location>
</feature>
<feature type="disulfide bond" evidence="4">
    <location>
        <begin position="315"/>
        <end position="327"/>
    </location>
</feature>
<protein>
    <recommendedName>
        <fullName evidence="1">EGF-containing fibulin-like extracellular matrix protein 2</fullName>
    </recommendedName>
    <alternativeName>
        <fullName evidence="1">Fibulin-4</fullName>
        <shortName>FIBL-4</shortName>
    </alternativeName>
    <alternativeName>
        <fullName>Protein H411</fullName>
    </alternativeName>
</protein>
<sequence>MLPFASCLPGSLLLWALLLLLLGAASPQDSEEPDSYTECTDGYEWDADSQHCRDVNECLTIPEACKGEMKCINHYGGYLCLPRSAAVINDLHGEGPPPPVPPAQHPNPCPPGYEPDEQESCVDVDECAQALHDCRPSQDCHNLPGSYQCTCPDGYRKVGPECVDIDECRYRYCQHRCVNLPGSFRCQCEPGFQLGPNNRSCVDVNECDMGAPCEQRCFNSYGTFLCRCNQGYELHRDGFSCSDIDECSYSSYLCQYRCVNEPGRFSCHCPQGYQLLATRLCQDIDECETGAHQCSEAQTCVNFHGGYRCVDTNRCVEPYVQVSDNRCFCPVSNPLCREQPSSIVHRYMSITSERSVPADVFQIQATSVYPGAYNAFQIRAGNTQGDFYIRQINNVSAMLVLARPVTGPREYVLDLEMVTMNSLMSYRASSVLRLTVFVGAYTF</sequence>